<dbReference type="EC" id="2.1.1.182" evidence="1"/>
<dbReference type="EMBL" id="FM242711">
    <property type="protein sequence ID" value="CAS03976.1"/>
    <property type="molecule type" value="Genomic_DNA"/>
</dbReference>
<dbReference type="RefSeq" id="WP_003731190.1">
    <property type="nucleotide sequence ID" value="NC_012488.1"/>
</dbReference>
<dbReference type="SMR" id="C1KYC1"/>
<dbReference type="KEGG" id="lmc:Lm4b_00185"/>
<dbReference type="HOGENOM" id="CLU_041220_0_0_9"/>
<dbReference type="GO" id="GO:0005829">
    <property type="term" value="C:cytosol"/>
    <property type="evidence" value="ECO:0007669"/>
    <property type="project" value="TreeGrafter"/>
</dbReference>
<dbReference type="GO" id="GO:0052908">
    <property type="term" value="F:16S rRNA (adenine(1518)-N(6)/adenine(1519)-N(6))-dimethyltransferase activity"/>
    <property type="evidence" value="ECO:0007669"/>
    <property type="project" value="UniProtKB-EC"/>
</dbReference>
<dbReference type="GO" id="GO:0003723">
    <property type="term" value="F:RNA binding"/>
    <property type="evidence" value="ECO:0007669"/>
    <property type="project" value="UniProtKB-KW"/>
</dbReference>
<dbReference type="CDD" id="cd02440">
    <property type="entry name" value="AdoMet_MTases"/>
    <property type="match status" value="1"/>
</dbReference>
<dbReference type="FunFam" id="1.10.8.100:FF:000002">
    <property type="entry name" value="Ribosomal RNA small subunit methyltransferase A"/>
    <property type="match status" value="1"/>
</dbReference>
<dbReference type="FunFam" id="3.40.50.150:FF:000023">
    <property type="entry name" value="Ribosomal RNA small subunit methyltransferase A"/>
    <property type="match status" value="1"/>
</dbReference>
<dbReference type="Gene3D" id="1.10.8.100">
    <property type="entry name" value="Ribosomal RNA adenine dimethylase-like, domain 2"/>
    <property type="match status" value="1"/>
</dbReference>
<dbReference type="Gene3D" id="3.40.50.150">
    <property type="entry name" value="Vaccinia Virus protein VP39"/>
    <property type="match status" value="1"/>
</dbReference>
<dbReference type="HAMAP" id="MF_00607">
    <property type="entry name" value="16SrRNA_methyltr_A"/>
    <property type="match status" value="1"/>
</dbReference>
<dbReference type="InterPro" id="IPR001737">
    <property type="entry name" value="KsgA/Erm"/>
</dbReference>
<dbReference type="InterPro" id="IPR023165">
    <property type="entry name" value="rRNA_Ade_diMease-like_C"/>
</dbReference>
<dbReference type="InterPro" id="IPR020596">
    <property type="entry name" value="rRNA_Ade_Mease_Trfase_CS"/>
</dbReference>
<dbReference type="InterPro" id="IPR020598">
    <property type="entry name" value="rRNA_Ade_methylase_Trfase_N"/>
</dbReference>
<dbReference type="InterPro" id="IPR011530">
    <property type="entry name" value="rRNA_adenine_dimethylase"/>
</dbReference>
<dbReference type="InterPro" id="IPR029063">
    <property type="entry name" value="SAM-dependent_MTases_sf"/>
</dbReference>
<dbReference type="NCBIfam" id="TIGR00755">
    <property type="entry name" value="ksgA"/>
    <property type="match status" value="1"/>
</dbReference>
<dbReference type="PANTHER" id="PTHR11727">
    <property type="entry name" value="DIMETHYLADENOSINE TRANSFERASE"/>
    <property type="match status" value="1"/>
</dbReference>
<dbReference type="PANTHER" id="PTHR11727:SF7">
    <property type="entry name" value="DIMETHYLADENOSINE TRANSFERASE-RELATED"/>
    <property type="match status" value="1"/>
</dbReference>
<dbReference type="Pfam" id="PF00398">
    <property type="entry name" value="RrnaAD"/>
    <property type="match status" value="1"/>
</dbReference>
<dbReference type="SMART" id="SM00650">
    <property type="entry name" value="rADc"/>
    <property type="match status" value="1"/>
</dbReference>
<dbReference type="SUPFAM" id="SSF53335">
    <property type="entry name" value="S-adenosyl-L-methionine-dependent methyltransferases"/>
    <property type="match status" value="1"/>
</dbReference>
<dbReference type="PROSITE" id="PS01131">
    <property type="entry name" value="RRNA_A_DIMETH"/>
    <property type="match status" value="1"/>
</dbReference>
<dbReference type="PROSITE" id="PS51689">
    <property type="entry name" value="SAM_RNA_A_N6_MT"/>
    <property type="match status" value="1"/>
</dbReference>
<comment type="function">
    <text evidence="1">Specifically dimethylates two adjacent adenosines (A1518 and A1519) in the loop of a conserved hairpin near the 3'-end of 16S rRNA in the 30S particle. May play a critical role in biogenesis of 30S subunits.</text>
</comment>
<comment type="catalytic activity">
    <reaction evidence="1">
        <text>adenosine(1518)/adenosine(1519) in 16S rRNA + 4 S-adenosyl-L-methionine = N(6)-dimethyladenosine(1518)/N(6)-dimethyladenosine(1519) in 16S rRNA + 4 S-adenosyl-L-homocysteine + 4 H(+)</text>
        <dbReference type="Rhea" id="RHEA:19609"/>
        <dbReference type="Rhea" id="RHEA-COMP:10232"/>
        <dbReference type="Rhea" id="RHEA-COMP:10233"/>
        <dbReference type="ChEBI" id="CHEBI:15378"/>
        <dbReference type="ChEBI" id="CHEBI:57856"/>
        <dbReference type="ChEBI" id="CHEBI:59789"/>
        <dbReference type="ChEBI" id="CHEBI:74411"/>
        <dbReference type="ChEBI" id="CHEBI:74493"/>
        <dbReference type="EC" id="2.1.1.182"/>
    </reaction>
</comment>
<comment type="subcellular location">
    <subcellularLocation>
        <location evidence="1">Cytoplasm</location>
    </subcellularLocation>
</comment>
<comment type="similarity">
    <text evidence="1">Belongs to the class I-like SAM-binding methyltransferase superfamily. rRNA adenine N(6)-methyltransferase family. RsmA subfamily.</text>
</comment>
<sequence>MSKDIATPGRTTEILKKYGFLFKKSLGQNFLIDSNILTRITDTAEITKETNVIEIGPGIGALTEQLAKTANEVVAFEIDQRLLPILDDTLSAYNNIQVVHGDVLKADVEEVIAEQFAKPDLPLKIVANLPYYVTTPIILKLLHDNIPADSMTFMLQKEVADRISAVPSTKSYGSLTIAIQFYMEAELAFIVPKTVFMPQPNVDSAVIHLKRRKEPLAEVNDEEFFFEVTRASFAQRRKTLWNNLASKFPALKPRKDELVEGLNAIGIDLIRRGETLDIPEFAKLSNFLGDFLKEK</sequence>
<reference key="1">
    <citation type="journal article" date="2012" name="BMC Genomics">
        <title>Comparative genomics and transcriptomics of lineages I, II, and III strains of Listeria monocytogenes.</title>
        <authorList>
            <person name="Hain T."/>
            <person name="Ghai R."/>
            <person name="Billion A."/>
            <person name="Kuenne C.T."/>
            <person name="Steinweg C."/>
            <person name="Izar B."/>
            <person name="Mohamed W."/>
            <person name="Mraheil M."/>
            <person name="Domann E."/>
            <person name="Schaffrath S."/>
            <person name="Karst U."/>
            <person name="Goesmann A."/>
            <person name="Oehm S."/>
            <person name="Puhler A."/>
            <person name="Merkl R."/>
            <person name="Vorwerk S."/>
            <person name="Glaser P."/>
            <person name="Garrido P."/>
            <person name="Rusniok C."/>
            <person name="Buchrieser C."/>
            <person name="Goebel W."/>
            <person name="Chakraborty T."/>
        </authorList>
    </citation>
    <scope>NUCLEOTIDE SEQUENCE [LARGE SCALE GENOMIC DNA]</scope>
    <source>
        <strain>CLIP80459</strain>
    </source>
</reference>
<protein>
    <recommendedName>
        <fullName evidence="1">Ribosomal RNA small subunit methyltransferase A</fullName>
        <ecNumber evidence="1">2.1.1.182</ecNumber>
    </recommendedName>
    <alternativeName>
        <fullName evidence="1">16S rRNA (adenine(1518)-N(6)/adenine(1519)-N(6))-dimethyltransferase</fullName>
    </alternativeName>
    <alternativeName>
        <fullName evidence="1">16S rRNA dimethyladenosine transferase</fullName>
    </alternativeName>
    <alternativeName>
        <fullName evidence="1">16S rRNA dimethylase</fullName>
    </alternativeName>
    <alternativeName>
        <fullName evidence="1">S-adenosylmethionine-6-N', N'-adenosyl(rRNA) dimethyltransferase</fullName>
    </alternativeName>
</protein>
<evidence type="ECO:0000255" key="1">
    <source>
        <dbReference type="HAMAP-Rule" id="MF_00607"/>
    </source>
</evidence>
<organism>
    <name type="scientific">Listeria monocytogenes serotype 4b (strain CLIP80459)</name>
    <dbReference type="NCBI Taxonomy" id="568819"/>
    <lineage>
        <taxon>Bacteria</taxon>
        <taxon>Bacillati</taxon>
        <taxon>Bacillota</taxon>
        <taxon>Bacilli</taxon>
        <taxon>Bacillales</taxon>
        <taxon>Listeriaceae</taxon>
        <taxon>Listeria</taxon>
    </lineage>
</organism>
<gene>
    <name evidence="1" type="primary">rsmA</name>
    <name evidence="1" type="synonym">ksgA</name>
    <name type="ordered locus">Lm4b_00185</name>
</gene>
<proteinExistence type="inferred from homology"/>
<name>RSMA_LISMC</name>
<feature type="chain" id="PRO_1000212249" description="Ribosomal RNA small subunit methyltransferase A">
    <location>
        <begin position="1"/>
        <end position="295"/>
    </location>
</feature>
<feature type="binding site" evidence="1">
    <location>
        <position position="29"/>
    </location>
    <ligand>
        <name>S-adenosyl-L-methionine</name>
        <dbReference type="ChEBI" id="CHEBI:59789"/>
    </ligand>
</feature>
<feature type="binding site" evidence="1">
    <location>
        <position position="31"/>
    </location>
    <ligand>
        <name>S-adenosyl-L-methionine</name>
        <dbReference type="ChEBI" id="CHEBI:59789"/>
    </ligand>
</feature>
<feature type="binding site" evidence="1">
    <location>
        <position position="56"/>
    </location>
    <ligand>
        <name>S-adenosyl-L-methionine</name>
        <dbReference type="ChEBI" id="CHEBI:59789"/>
    </ligand>
</feature>
<feature type="binding site" evidence="1">
    <location>
        <position position="77"/>
    </location>
    <ligand>
        <name>S-adenosyl-L-methionine</name>
        <dbReference type="ChEBI" id="CHEBI:59789"/>
    </ligand>
</feature>
<feature type="binding site" evidence="1">
    <location>
        <position position="102"/>
    </location>
    <ligand>
        <name>S-adenosyl-L-methionine</name>
        <dbReference type="ChEBI" id="CHEBI:59789"/>
    </ligand>
</feature>
<feature type="binding site" evidence="1">
    <location>
        <position position="128"/>
    </location>
    <ligand>
        <name>S-adenosyl-L-methionine</name>
        <dbReference type="ChEBI" id="CHEBI:59789"/>
    </ligand>
</feature>
<accession>C1KYC1</accession>
<keyword id="KW-0963">Cytoplasm</keyword>
<keyword id="KW-0489">Methyltransferase</keyword>
<keyword id="KW-0694">RNA-binding</keyword>
<keyword id="KW-0698">rRNA processing</keyword>
<keyword id="KW-0949">S-adenosyl-L-methionine</keyword>
<keyword id="KW-0808">Transferase</keyword>